<sequence length="193" mass="21458">MLLSDRDILAAQADGHISLDPWTPEMVQPASIDVRLDRFFRLFNNHAYTYVDPAENQGELTEQFEVKPDEPWILHPGEFALGSTWEYVKLDASIAARLEGKSSLGRLGILTHSTAGFIDPGFEGHITLELSNVSTLPVKLWPGMKIGQMCFFQLSSPAEHPYGSATTGSHYQGQRGPTPSRSYVNFYKADITD</sequence>
<name>DCDB_BIFAA</name>
<gene>
    <name evidence="1" type="primary">dcd</name>
    <name type="ordered locus">BAD_1580</name>
</gene>
<comment type="function">
    <text evidence="1">Bifunctional enzyme that catalyzes both the deamination of dCTP to dUTP and the hydrolysis of dUTP to dUMP without releasing the toxic dUTP intermediate.</text>
</comment>
<comment type="catalytic activity">
    <reaction evidence="1">
        <text>dCTP + 2 H2O = dUMP + NH4(+) + diphosphate</text>
        <dbReference type="Rhea" id="RHEA:19205"/>
        <dbReference type="ChEBI" id="CHEBI:15377"/>
        <dbReference type="ChEBI" id="CHEBI:28938"/>
        <dbReference type="ChEBI" id="CHEBI:33019"/>
        <dbReference type="ChEBI" id="CHEBI:61481"/>
        <dbReference type="ChEBI" id="CHEBI:246422"/>
        <dbReference type="EC" id="3.5.4.30"/>
    </reaction>
</comment>
<comment type="pathway">
    <text evidence="1">Pyrimidine metabolism; dUMP biosynthesis; dUMP from dCTP: step 1/1.</text>
</comment>
<comment type="subunit">
    <text evidence="1">Homotrimer.</text>
</comment>
<comment type="similarity">
    <text evidence="1">Belongs to the dCTP deaminase family.</text>
</comment>
<feature type="chain" id="PRO_1000009682" description="dCTP deaminase, dUMP-forming">
    <location>
        <begin position="1"/>
        <end position="193"/>
    </location>
</feature>
<feature type="active site" description="Proton donor/acceptor" evidence="1">
    <location>
        <position position="129"/>
    </location>
</feature>
<feature type="binding site" evidence="1">
    <location>
        <begin position="101"/>
        <end position="106"/>
    </location>
    <ligand>
        <name>dCTP</name>
        <dbReference type="ChEBI" id="CHEBI:61481"/>
    </ligand>
</feature>
<feature type="binding site" evidence="1">
    <location>
        <position position="119"/>
    </location>
    <ligand>
        <name>dCTP</name>
        <dbReference type="ChEBI" id="CHEBI:61481"/>
    </ligand>
</feature>
<feature type="binding site" evidence="1">
    <location>
        <begin position="127"/>
        <end position="129"/>
    </location>
    <ligand>
        <name>dCTP</name>
        <dbReference type="ChEBI" id="CHEBI:61481"/>
    </ligand>
</feature>
<feature type="binding site" evidence="1">
    <location>
        <position position="148"/>
    </location>
    <ligand>
        <name>dCTP</name>
        <dbReference type="ChEBI" id="CHEBI:61481"/>
    </ligand>
</feature>
<feature type="binding site" evidence="1">
    <location>
        <position position="162"/>
    </location>
    <ligand>
        <name>dCTP</name>
        <dbReference type="ChEBI" id="CHEBI:61481"/>
    </ligand>
</feature>
<feature type="binding site" evidence="1">
    <location>
        <position position="174"/>
    </location>
    <ligand>
        <name>dCTP</name>
        <dbReference type="ChEBI" id="CHEBI:61481"/>
    </ligand>
</feature>
<feature type="site" description="Important for bifunctional activity" evidence="1">
    <location>
        <begin position="116"/>
        <end position="117"/>
    </location>
</feature>
<organism>
    <name type="scientific">Bifidobacterium adolescentis (strain ATCC 15703 / DSM 20083 / NCTC 11814 / E194a)</name>
    <dbReference type="NCBI Taxonomy" id="367928"/>
    <lineage>
        <taxon>Bacteria</taxon>
        <taxon>Bacillati</taxon>
        <taxon>Actinomycetota</taxon>
        <taxon>Actinomycetes</taxon>
        <taxon>Bifidobacteriales</taxon>
        <taxon>Bifidobacteriaceae</taxon>
        <taxon>Bifidobacterium</taxon>
    </lineage>
</organism>
<evidence type="ECO:0000255" key="1">
    <source>
        <dbReference type="HAMAP-Rule" id="MF_00146"/>
    </source>
</evidence>
<reference key="1">
    <citation type="submission" date="2006-12" db="EMBL/GenBank/DDBJ databases">
        <title>Bifidobacterium adolescentis complete genome sequence.</title>
        <authorList>
            <person name="Suzuki T."/>
            <person name="Tsuda Y."/>
            <person name="Kanou N."/>
            <person name="Inoue T."/>
            <person name="Kumazaki K."/>
            <person name="Nagano S."/>
            <person name="Hirai S."/>
            <person name="Tanaka K."/>
            <person name="Watanabe K."/>
        </authorList>
    </citation>
    <scope>NUCLEOTIDE SEQUENCE [LARGE SCALE GENOMIC DNA]</scope>
    <source>
        <strain>ATCC 15703 / DSM 20083 / NCTC 11814 / E194a</strain>
    </source>
</reference>
<protein>
    <recommendedName>
        <fullName evidence="1">dCTP deaminase, dUMP-forming</fullName>
        <ecNumber evidence="1">3.5.4.30</ecNumber>
    </recommendedName>
    <alternativeName>
        <fullName evidence="1">Bifunctional dCTP deaminase:dUTPase</fullName>
    </alternativeName>
    <alternativeName>
        <fullName evidence="1">DCD-DUT</fullName>
    </alternativeName>
</protein>
<dbReference type="EC" id="3.5.4.30" evidence="1"/>
<dbReference type="EMBL" id="AP009256">
    <property type="protein sequence ID" value="BAF40361.1"/>
    <property type="molecule type" value="Genomic_DNA"/>
</dbReference>
<dbReference type="RefSeq" id="WP_011743875.1">
    <property type="nucleotide sequence ID" value="NZ_CAXVKE010000005.1"/>
</dbReference>
<dbReference type="SMR" id="A1A3S8"/>
<dbReference type="STRING" id="367928.BAD_1580"/>
<dbReference type="PaxDb" id="1680-BADO_1686"/>
<dbReference type="GeneID" id="4556244"/>
<dbReference type="KEGG" id="bad:BAD_1580"/>
<dbReference type="HOGENOM" id="CLU_087476_2_0_11"/>
<dbReference type="UniPathway" id="UPA00610">
    <property type="reaction ID" value="UER00667"/>
</dbReference>
<dbReference type="Proteomes" id="UP000008702">
    <property type="component" value="Chromosome"/>
</dbReference>
<dbReference type="GO" id="GO:0033973">
    <property type="term" value="F:dCTP deaminase (dUMP-forming) activity"/>
    <property type="evidence" value="ECO:0007669"/>
    <property type="project" value="UniProtKB-UniRule"/>
</dbReference>
<dbReference type="GO" id="GO:0008829">
    <property type="term" value="F:dCTP deaminase activity"/>
    <property type="evidence" value="ECO:0007669"/>
    <property type="project" value="InterPro"/>
</dbReference>
<dbReference type="GO" id="GO:0000166">
    <property type="term" value="F:nucleotide binding"/>
    <property type="evidence" value="ECO:0007669"/>
    <property type="project" value="UniProtKB-KW"/>
</dbReference>
<dbReference type="GO" id="GO:0006226">
    <property type="term" value="P:dUMP biosynthetic process"/>
    <property type="evidence" value="ECO:0007669"/>
    <property type="project" value="UniProtKB-UniRule"/>
</dbReference>
<dbReference type="GO" id="GO:0006229">
    <property type="term" value="P:dUTP biosynthetic process"/>
    <property type="evidence" value="ECO:0007669"/>
    <property type="project" value="InterPro"/>
</dbReference>
<dbReference type="GO" id="GO:0015949">
    <property type="term" value="P:nucleobase-containing small molecule interconversion"/>
    <property type="evidence" value="ECO:0007669"/>
    <property type="project" value="TreeGrafter"/>
</dbReference>
<dbReference type="CDD" id="cd07557">
    <property type="entry name" value="trimeric_dUTPase"/>
    <property type="match status" value="1"/>
</dbReference>
<dbReference type="FunFam" id="2.70.40.10:FF:000005">
    <property type="entry name" value="dCTP deaminase, dUMP-forming"/>
    <property type="match status" value="1"/>
</dbReference>
<dbReference type="Gene3D" id="2.70.40.10">
    <property type="match status" value="1"/>
</dbReference>
<dbReference type="HAMAP" id="MF_00146">
    <property type="entry name" value="dCTP_deaminase"/>
    <property type="match status" value="1"/>
</dbReference>
<dbReference type="InterPro" id="IPR011962">
    <property type="entry name" value="dCTP_deaminase"/>
</dbReference>
<dbReference type="InterPro" id="IPR036157">
    <property type="entry name" value="dUTPase-like_sf"/>
</dbReference>
<dbReference type="InterPro" id="IPR033704">
    <property type="entry name" value="dUTPase_trimeric"/>
</dbReference>
<dbReference type="NCBIfam" id="TIGR02274">
    <property type="entry name" value="dCTP_deam"/>
    <property type="match status" value="1"/>
</dbReference>
<dbReference type="PANTHER" id="PTHR42680">
    <property type="entry name" value="DCTP DEAMINASE"/>
    <property type="match status" value="1"/>
</dbReference>
<dbReference type="PANTHER" id="PTHR42680:SF3">
    <property type="entry name" value="DCTP DEAMINASE"/>
    <property type="match status" value="1"/>
</dbReference>
<dbReference type="Pfam" id="PF22769">
    <property type="entry name" value="DCD"/>
    <property type="match status" value="1"/>
</dbReference>
<dbReference type="SUPFAM" id="SSF51283">
    <property type="entry name" value="dUTPase-like"/>
    <property type="match status" value="1"/>
</dbReference>
<keyword id="KW-0378">Hydrolase</keyword>
<keyword id="KW-0546">Nucleotide metabolism</keyword>
<keyword id="KW-0547">Nucleotide-binding</keyword>
<keyword id="KW-1185">Reference proteome</keyword>
<accession>A1A3S8</accession>
<proteinExistence type="inferred from homology"/>